<name>AIM24_PENRW</name>
<evidence type="ECO:0000250" key="1"/>
<evidence type="ECO:0000255" key="2"/>
<evidence type="ECO:0000256" key="3">
    <source>
        <dbReference type="SAM" id="MobiDB-lite"/>
    </source>
</evidence>
<evidence type="ECO:0000305" key="4"/>
<sequence>MRPLQGVRTLSWTRVVPRAHRQTRYIQIRAAPSGVPSVNGDNLPLASTPSSVESRDARFDVVGAPYSLLSVSLSASQNLYTRRGTLVGLSGKADNVVSTLSVLEPFRRAIVGVPFLYQKISSPSPVTALVSVRSPNTSFAVVNVNGSVDWMVAQRRALLAWTGRSLNIKPTINANLSLSHWGSSEVTGRGLIALVGNGQLYSVELKDGEQYIAHPSNVVAYTMASNPPRPYRFKSTTLNFQVPGLKTLPRLLQNAKFVRDVSDSKAYKTTMQWFHKLRTWSRMTIWGDRLFLQFDGPMTILVQSRGPRLNDVLSAQEANEIANVPSGFTSPPPRSTEGEKTEKNPLEDKPEEEKTEAEKAVSNISGLTRSVAELEQEIQGTSRSVAKLRKDGKVEIEEVARSN</sequence>
<dbReference type="EMBL" id="AM920437">
    <property type="protein sequence ID" value="CAP97466.1"/>
    <property type="molecule type" value="Genomic_DNA"/>
</dbReference>
<dbReference type="RefSeq" id="XP_002564222.1">
    <property type="nucleotide sequence ID" value="XM_002564176.1"/>
</dbReference>
<dbReference type="GeneID" id="8306830"/>
<dbReference type="KEGG" id="pcs:N7525_006016"/>
<dbReference type="VEuPathDB" id="FungiDB:PCH_Pc22g01780"/>
<dbReference type="eggNOG" id="ENOG502RXC5">
    <property type="taxonomic scope" value="Eukaryota"/>
</dbReference>
<dbReference type="HOGENOM" id="CLU_046558_0_0_1"/>
<dbReference type="OMA" id="QTRCVQI"/>
<dbReference type="OrthoDB" id="5295771at2759"/>
<dbReference type="BioCyc" id="PCHR:PC22G01780-MONOMER"/>
<dbReference type="Proteomes" id="UP000000724">
    <property type="component" value="Contig Pc00c22"/>
</dbReference>
<dbReference type="GO" id="GO:0005743">
    <property type="term" value="C:mitochondrial inner membrane"/>
    <property type="evidence" value="ECO:0007669"/>
    <property type="project" value="TreeGrafter"/>
</dbReference>
<dbReference type="GO" id="GO:0007007">
    <property type="term" value="P:inner mitochondrial membrane organization"/>
    <property type="evidence" value="ECO:0007669"/>
    <property type="project" value="TreeGrafter"/>
</dbReference>
<dbReference type="FunFam" id="3.60.160.10:FF:000001">
    <property type="entry name" value="Altered inheritance of mitochondria protein 24, mitochondrial"/>
    <property type="match status" value="1"/>
</dbReference>
<dbReference type="Gene3D" id="3.60.160.10">
    <property type="entry name" value="Mitochondrial biogenesis AIM24"/>
    <property type="match status" value="1"/>
</dbReference>
<dbReference type="InterPro" id="IPR002838">
    <property type="entry name" value="AIM24"/>
</dbReference>
<dbReference type="InterPro" id="IPR036983">
    <property type="entry name" value="AIM24_sf"/>
</dbReference>
<dbReference type="InterPro" id="IPR016031">
    <property type="entry name" value="Trp_RNA-bd_attenuator-like_dom"/>
</dbReference>
<dbReference type="PANTHER" id="PTHR36959">
    <property type="entry name" value="ALTERED INHERITANCE OF MITOCHONDRIA PROTEIN 24, MITOCHONDRIAL"/>
    <property type="match status" value="1"/>
</dbReference>
<dbReference type="PANTHER" id="PTHR36959:SF2">
    <property type="entry name" value="ALTERED INHERITANCE OF MITOCHONDRIA PROTEIN 24, MITOCHONDRIAL"/>
    <property type="match status" value="1"/>
</dbReference>
<dbReference type="Pfam" id="PF01987">
    <property type="entry name" value="AIM24"/>
    <property type="match status" value="1"/>
</dbReference>
<dbReference type="SUPFAM" id="SSF51219">
    <property type="entry name" value="TRAP-like"/>
    <property type="match status" value="1"/>
</dbReference>
<gene>
    <name type="primary">aim24</name>
    <name type="ORF">Pc22g01780</name>
</gene>
<feature type="transit peptide" description="Mitochondrion" evidence="2">
    <location>
        <begin position="1"/>
        <end position="30"/>
    </location>
</feature>
<feature type="chain" id="PRO_0000399584" description="Altered inheritance of mitochondria protein 24, mitochondrial">
    <location>
        <begin position="31"/>
        <end position="403"/>
    </location>
</feature>
<feature type="region of interest" description="Disordered" evidence="3">
    <location>
        <begin position="320"/>
        <end position="364"/>
    </location>
</feature>
<feature type="compositionally biased region" description="Basic and acidic residues" evidence="3">
    <location>
        <begin position="336"/>
        <end position="359"/>
    </location>
</feature>
<comment type="subcellular location">
    <subcellularLocation>
        <location evidence="1">Mitochondrion</location>
    </subcellularLocation>
</comment>
<comment type="similarity">
    <text evidence="4">Belongs to the AIM24 family.</text>
</comment>
<reference key="1">
    <citation type="journal article" date="2008" name="Nat. Biotechnol.">
        <title>Genome sequencing and analysis of the filamentous fungus Penicillium chrysogenum.</title>
        <authorList>
            <person name="van den Berg M.A."/>
            <person name="Albang R."/>
            <person name="Albermann K."/>
            <person name="Badger J.H."/>
            <person name="Daran J.-M."/>
            <person name="Driessen A.J.M."/>
            <person name="Garcia-Estrada C."/>
            <person name="Fedorova N.D."/>
            <person name="Harris D.M."/>
            <person name="Heijne W.H.M."/>
            <person name="Joardar V.S."/>
            <person name="Kiel J.A.K.W."/>
            <person name="Kovalchuk A."/>
            <person name="Martin J.F."/>
            <person name="Nierman W.C."/>
            <person name="Nijland J.G."/>
            <person name="Pronk J.T."/>
            <person name="Roubos J.A."/>
            <person name="van der Klei I.J."/>
            <person name="van Peij N.N.M.E."/>
            <person name="Veenhuis M."/>
            <person name="von Doehren H."/>
            <person name="Wagner C."/>
            <person name="Wortman J.R."/>
            <person name="Bovenberg R.A.L."/>
        </authorList>
    </citation>
    <scope>NUCLEOTIDE SEQUENCE [LARGE SCALE GENOMIC DNA]</scope>
    <source>
        <strain>ATCC 28089 / DSM 1075 / NRRL 1951 / Wisconsin 54-1255</strain>
    </source>
</reference>
<organism>
    <name type="scientific">Penicillium rubens (strain ATCC 28089 / DSM 1075 / NRRL 1951 / Wisconsin 54-1255)</name>
    <name type="common">Penicillium chrysogenum</name>
    <dbReference type="NCBI Taxonomy" id="500485"/>
    <lineage>
        <taxon>Eukaryota</taxon>
        <taxon>Fungi</taxon>
        <taxon>Dikarya</taxon>
        <taxon>Ascomycota</taxon>
        <taxon>Pezizomycotina</taxon>
        <taxon>Eurotiomycetes</taxon>
        <taxon>Eurotiomycetidae</taxon>
        <taxon>Eurotiales</taxon>
        <taxon>Aspergillaceae</taxon>
        <taxon>Penicillium</taxon>
        <taxon>Penicillium chrysogenum species complex</taxon>
    </lineage>
</organism>
<keyword id="KW-0496">Mitochondrion</keyword>
<keyword id="KW-1185">Reference proteome</keyword>
<keyword id="KW-0809">Transit peptide</keyword>
<proteinExistence type="inferred from homology"/>
<protein>
    <recommendedName>
        <fullName>Altered inheritance of mitochondria protein 24, mitochondrial</fullName>
    </recommendedName>
</protein>
<accession>B6HP17</accession>